<dbReference type="EMBL" id="CP000446">
    <property type="protein sequence ID" value="ABI37304.1"/>
    <property type="molecule type" value="Genomic_DNA"/>
</dbReference>
<dbReference type="RefSeq" id="WP_011070631.1">
    <property type="nucleotide sequence ID" value="NC_008321.1"/>
</dbReference>
<dbReference type="SMR" id="Q0HNR3"/>
<dbReference type="KEGG" id="she:Shewmr4_0223"/>
<dbReference type="HOGENOM" id="CLU_092403_0_2_6"/>
<dbReference type="GO" id="GO:0015935">
    <property type="term" value="C:small ribosomal subunit"/>
    <property type="evidence" value="ECO:0007669"/>
    <property type="project" value="InterPro"/>
</dbReference>
<dbReference type="GO" id="GO:0019843">
    <property type="term" value="F:rRNA binding"/>
    <property type="evidence" value="ECO:0007669"/>
    <property type="project" value="UniProtKB-UniRule"/>
</dbReference>
<dbReference type="GO" id="GO:0003735">
    <property type="term" value="F:structural constituent of ribosome"/>
    <property type="evidence" value="ECO:0007669"/>
    <property type="project" value="InterPro"/>
</dbReference>
<dbReference type="GO" id="GO:0042274">
    <property type="term" value="P:ribosomal small subunit biogenesis"/>
    <property type="evidence" value="ECO:0007669"/>
    <property type="project" value="TreeGrafter"/>
</dbReference>
<dbReference type="GO" id="GO:0006412">
    <property type="term" value="P:translation"/>
    <property type="evidence" value="ECO:0007669"/>
    <property type="project" value="UniProtKB-UniRule"/>
</dbReference>
<dbReference type="CDD" id="cd00165">
    <property type="entry name" value="S4"/>
    <property type="match status" value="1"/>
</dbReference>
<dbReference type="FunFam" id="1.10.1050.10:FF:000001">
    <property type="entry name" value="30S ribosomal protein S4"/>
    <property type="match status" value="1"/>
</dbReference>
<dbReference type="FunFam" id="3.10.290.10:FF:000001">
    <property type="entry name" value="30S ribosomal protein S4"/>
    <property type="match status" value="1"/>
</dbReference>
<dbReference type="Gene3D" id="1.10.1050.10">
    <property type="entry name" value="Ribosomal Protein S4 Delta 41, Chain A, domain 1"/>
    <property type="match status" value="1"/>
</dbReference>
<dbReference type="Gene3D" id="3.10.290.10">
    <property type="entry name" value="RNA-binding S4 domain"/>
    <property type="match status" value="1"/>
</dbReference>
<dbReference type="HAMAP" id="MF_01306_B">
    <property type="entry name" value="Ribosomal_uS4_B"/>
    <property type="match status" value="1"/>
</dbReference>
<dbReference type="InterPro" id="IPR022801">
    <property type="entry name" value="Ribosomal_uS4"/>
</dbReference>
<dbReference type="InterPro" id="IPR005709">
    <property type="entry name" value="Ribosomal_uS4_bac-type"/>
</dbReference>
<dbReference type="InterPro" id="IPR018079">
    <property type="entry name" value="Ribosomal_uS4_CS"/>
</dbReference>
<dbReference type="InterPro" id="IPR001912">
    <property type="entry name" value="Ribosomal_uS4_N"/>
</dbReference>
<dbReference type="InterPro" id="IPR002942">
    <property type="entry name" value="S4_RNA-bd"/>
</dbReference>
<dbReference type="InterPro" id="IPR036986">
    <property type="entry name" value="S4_RNA-bd_sf"/>
</dbReference>
<dbReference type="NCBIfam" id="NF003717">
    <property type="entry name" value="PRK05327.1"/>
    <property type="match status" value="1"/>
</dbReference>
<dbReference type="NCBIfam" id="TIGR01017">
    <property type="entry name" value="rpsD_bact"/>
    <property type="match status" value="1"/>
</dbReference>
<dbReference type="PANTHER" id="PTHR11831">
    <property type="entry name" value="30S 40S RIBOSOMAL PROTEIN"/>
    <property type="match status" value="1"/>
</dbReference>
<dbReference type="PANTHER" id="PTHR11831:SF4">
    <property type="entry name" value="SMALL RIBOSOMAL SUBUNIT PROTEIN US4M"/>
    <property type="match status" value="1"/>
</dbReference>
<dbReference type="Pfam" id="PF00163">
    <property type="entry name" value="Ribosomal_S4"/>
    <property type="match status" value="1"/>
</dbReference>
<dbReference type="Pfam" id="PF01479">
    <property type="entry name" value="S4"/>
    <property type="match status" value="1"/>
</dbReference>
<dbReference type="SMART" id="SM01390">
    <property type="entry name" value="Ribosomal_S4"/>
    <property type="match status" value="1"/>
</dbReference>
<dbReference type="SMART" id="SM00363">
    <property type="entry name" value="S4"/>
    <property type="match status" value="1"/>
</dbReference>
<dbReference type="SUPFAM" id="SSF55174">
    <property type="entry name" value="Alpha-L RNA-binding motif"/>
    <property type="match status" value="1"/>
</dbReference>
<dbReference type="PROSITE" id="PS00632">
    <property type="entry name" value="RIBOSOMAL_S4"/>
    <property type="match status" value="1"/>
</dbReference>
<dbReference type="PROSITE" id="PS50889">
    <property type="entry name" value="S4"/>
    <property type="match status" value="1"/>
</dbReference>
<feature type="chain" id="PRO_0000293367" description="Small ribosomal subunit protein uS4">
    <location>
        <begin position="1"/>
        <end position="206"/>
    </location>
</feature>
<feature type="domain" description="S4 RNA-binding" evidence="1">
    <location>
        <begin position="96"/>
        <end position="156"/>
    </location>
</feature>
<proteinExistence type="inferred from homology"/>
<organism>
    <name type="scientific">Shewanella sp. (strain MR-4)</name>
    <dbReference type="NCBI Taxonomy" id="60480"/>
    <lineage>
        <taxon>Bacteria</taxon>
        <taxon>Pseudomonadati</taxon>
        <taxon>Pseudomonadota</taxon>
        <taxon>Gammaproteobacteria</taxon>
        <taxon>Alteromonadales</taxon>
        <taxon>Shewanellaceae</taxon>
        <taxon>Shewanella</taxon>
    </lineage>
</organism>
<comment type="function">
    <text evidence="1">One of the primary rRNA binding proteins, it binds directly to 16S rRNA where it nucleates assembly of the body of the 30S subunit.</text>
</comment>
<comment type="function">
    <text evidence="1">With S5 and S12 plays an important role in translational accuracy.</text>
</comment>
<comment type="subunit">
    <text evidence="1">Part of the 30S ribosomal subunit. Contacts protein S5. The interaction surface between S4 and S5 is involved in control of translational fidelity.</text>
</comment>
<comment type="similarity">
    <text evidence="1">Belongs to the universal ribosomal protein uS4 family.</text>
</comment>
<evidence type="ECO:0000255" key="1">
    <source>
        <dbReference type="HAMAP-Rule" id="MF_01306"/>
    </source>
</evidence>
<evidence type="ECO:0000305" key="2"/>
<gene>
    <name evidence="1" type="primary">rpsD</name>
    <name type="ordered locus">Shewmr4_0223</name>
</gene>
<name>RS4_SHESM</name>
<protein>
    <recommendedName>
        <fullName evidence="1">Small ribosomal subunit protein uS4</fullName>
    </recommendedName>
    <alternativeName>
        <fullName evidence="2">30S ribosomal protein S4</fullName>
    </alternativeName>
</protein>
<reference key="1">
    <citation type="submission" date="2006-08" db="EMBL/GenBank/DDBJ databases">
        <title>Complete sequence of Shewanella sp. MR-4.</title>
        <authorList>
            <consortium name="US DOE Joint Genome Institute"/>
            <person name="Copeland A."/>
            <person name="Lucas S."/>
            <person name="Lapidus A."/>
            <person name="Barry K."/>
            <person name="Detter J.C."/>
            <person name="Glavina del Rio T."/>
            <person name="Hammon N."/>
            <person name="Israni S."/>
            <person name="Dalin E."/>
            <person name="Tice H."/>
            <person name="Pitluck S."/>
            <person name="Kiss H."/>
            <person name="Brettin T."/>
            <person name="Bruce D."/>
            <person name="Han C."/>
            <person name="Tapia R."/>
            <person name="Gilna P."/>
            <person name="Schmutz J."/>
            <person name="Larimer F."/>
            <person name="Land M."/>
            <person name="Hauser L."/>
            <person name="Kyrpides N."/>
            <person name="Mikhailova N."/>
            <person name="Nealson K."/>
            <person name="Konstantinidis K."/>
            <person name="Klappenbach J."/>
            <person name="Tiedje J."/>
            <person name="Richardson P."/>
        </authorList>
    </citation>
    <scope>NUCLEOTIDE SEQUENCE [LARGE SCALE GENOMIC DNA]</scope>
    <source>
        <strain>MR-4</strain>
    </source>
</reference>
<keyword id="KW-0687">Ribonucleoprotein</keyword>
<keyword id="KW-0689">Ribosomal protein</keyword>
<keyword id="KW-0694">RNA-binding</keyword>
<keyword id="KW-0699">rRNA-binding</keyword>
<sequence length="206" mass="23436">MARYLGPKLKLSRREGTDLFLKSGVRAIDSKCKLESAPGQHGARKPRLSEYGLQLREKQKVRRIYGVLEKQFRNYYKEAARLKGNTGENLLQLLETRLDNVVYRMGFGATRAESRQLVSHKSVMVNGRVVNIPSFKVSANDVVSIREKSRTQARIKAALEVAAQREKPTWVEVDSAKMEGAFKRIPERSDLSAEINEQLIVELYSK</sequence>
<accession>Q0HNR3</accession>